<accession>B7LK46</accession>
<keyword id="KW-0255">Endonuclease</keyword>
<keyword id="KW-0378">Hydrolase</keyword>
<keyword id="KW-0540">Nuclease</keyword>
<keyword id="KW-0694">RNA-binding</keyword>
<keyword id="KW-0819">tRNA processing</keyword>
<protein>
    <recommendedName>
        <fullName evidence="1">Ribonuclease P protein component</fullName>
        <shortName evidence="1">RNase P protein</shortName>
        <shortName evidence="1">RNaseP protein</shortName>
        <ecNumber evidence="1">3.1.26.5</ecNumber>
    </recommendedName>
    <alternativeName>
        <fullName evidence="1">Protein C5</fullName>
    </alternativeName>
</protein>
<comment type="function">
    <text evidence="1">RNaseP catalyzes the removal of the 5'-leader sequence from pre-tRNA to produce the mature 5'-terminus. It can also cleave other RNA substrates such as 4.5S RNA. The protein component plays an auxiliary but essential role in vivo by binding to the 5'-leader sequence and broadening the substrate specificity of the ribozyme.</text>
</comment>
<comment type="catalytic activity">
    <reaction evidence="1">
        <text>Endonucleolytic cleavage of RNA, removing 5'-extranucleotides from tRNA precursor.</text>
        <dbReference type="EC" id="3.1.26.5"/>
    </reaction>
</comment>
<comment type="subunit">
    <text evidence="1">Consists of a catalytic RNA component (M1 or rnpB) and a protein subunit.</text>
</comment>
<comment type="similarity">
    <text evidence="1">Belongs to the RnpA family.</text>
</comment>
<feature type="chain" id="PRO_1000194643" description="Ribonuclease P protein component">
    <location>
        <begin position="1"/>
        <end position="119"/>
    </location>
</feature>
<sequence length="119" mass="13789">MVKLAFPRELRLLTPSQFTFVFQQPQRAGTPQITILGRLNSLGHPRIGLTVAKKNVRRAHERNRIKRLTRESFRLRQHELPAMDFVVVAKKGVADLDNRALSEALEKLWRRHCRLARGS</sequence>
<gene>
    <name evidence="1" type="primary">rnpA</name>
    <name type="ordered locus">EFER_4000</name>
</gene>
<reference key="1">
    <citation type="journal article" date="2009" name="PLoS Genet.">
        <title>Organised genome dynamics in the Escherichia coli species results in highly diverse adaptive paths.</title>
        <authorList>
            <person name="Touchon M."/>
            <person name="Hoede C."/>
            <person name="Tenaillon O."/>
            <person name="Barbe V."/>
            <person name="Baeriswyl S."/>
            <person name="Bidet P."/>
            <person name="Bingen E."/>
            <person name="Bonacorsi S."/>
            <person name="Bouchier C."/>
            <person name="Bouvet O."/>
            <person name="Calteau A."/>
            <person name="Chiapello H."/>
            <person name="Clermont O."/>
            <person name="Cruveiller S."/>
            <person name="Danchin A."/>
            <person name="Diard M."/>
            <person name="Dossat C."/>
            <person name="Karoui M.E."/>
            <person name="Frapy E."/>
            <person name="Garry L."/>
            <person name="Ghigo J.M."/>
            <person name="Gilles A.M."/>
            <person name="Johnson J."/>
            <person name="Le Bouguenec C."/>
            <person name="Lescat M."/>
            <person name="Mangenot S."/>
            <person name="Martinez-Jehanne V."/>
            <person name="Matic I."/>
            <person name="Nassif X."/>
            <person name="Oztas S."/>
            <person name="Petit M.A."/>
            <person name="Pichon C."/>
            <person name="Rouy Z."/>
            <person name="Ruf C.S."/>
            <person name="Schneider D."/>
            <person name="Tourret J."/>
            <person name="Vacherie B."/>
            <person name="Vallenet D."/>
            <person name="Medigue C."/>
            <person name="Rocha E.P.C."/>
            <person name="Denamur E."/>
        </authorList>
    </citation>
    <scope>NUCLEOTIDE SEQUENCE [LARGE SCALE GENOMIC DNA]</scope>
    <source>
        <strain>ATCC 35469 / DSM 13698 / BCRC 15582 / CCUG 18766 / IAM 14443 / JCM 21226 / LMG 7866 / NBRC 102419 / NCTC 12128 / CDC 0568-73</strain>
    </source>
</reference>
<organism>
    <name type="scientific">Escherichia fergusonii (strain ATCC 35469 / DSM 13698 / CCUG 18766 / IAM 14443 / JCM 21226 / LMG 7866 / NBRC 102419 / NCTC 12128 / CDC 0568-73)</name>
    <dbReference type="NCBI Taxonomy" id="585054"/>
    <lineage>
        <taxon>Bacteria</taxon>
        <taxon>Pseudomonadati</taxon>
        <taxon>Pseudomonadota</taxon>
        <taxon>Gammaproteobacteria</taxon>
        <taxon>Enterobacterales</taxon>
        <taxon>Enterobacteriaceae</taxon>
        <taxon>Escherichia</taxon>
    </lineage>
</organism>
<evidence type="ECO:0000255" key="1">
    <source>
        <dbReference type="HAMAP-Rule" id="MF_00227"/>
    </source>
</evidence>
<name>RNPA_ESCF3</name>
<proteinExistence type="inferred from homology"/>
<dbReference type="EC" id="3.1.26.5" evidence="1"/>
<dbReference type="EMBL" id="CU928158">
    <property type="protein sequence ID" value="CAQ91434.1"/>
    <property type="molecule type" value="Genomic_DNA"/>
</dbReference>
<dbReference type="RefSeq" id="WP_000239730.1">
    <property type="nucleotide sequence ID" value="NC_011740.1"/>
</dbReference>
<dbReference type="SMR" id="B7LK46"/>
<dbReference type="GeneID" id="93778446"/>
<dbReference type="KEGG" id="efe:EFER_4000"/>
<dbReference type="HOGENOM" id="CLU_117179_11_0_6"/>
<dbReference type="OrthoDB" id="9796422at2"/>
<dbReference type="Proteomes" id="UP000000745">
    <property type="component" value="Chromosome"/>
</dbReference>
<dbReference type="GO" id="GO:0030677">
    <property type="term" value="C:ribonuclease P complex"/>
    <property type="evidence" value="ECO:0007669"/>
    <property type="project" value="TreeGrafter"/>
</dbReference>
<dbReference type="GO" id="GO:0042781">
    <property type="term" value="F:3'-tRNA processing endoribonuclease activity"/>
    <property type="evidence" value="ECO:0007669"/>
    <property type="project" value="TreeGrafter"/>
</dbReference>
<dbReference type="GO" id="GO:0004526">
    <property type="term" value="F:ribonuclease P activity"/>
    <property type="evidence" value="ECO:0007669"/>
    <property type="project" value="UniProtKB-UniRule"/>
</dbReference>
<dbReference type="GO" id="GO:0000049">
    <property type="term" value="F:tRNA binding"/>
    <property type="evidence" value="ECO:0007669"/>
    <property type="project" value="UniProtKB-UniRule"/>
</dbReference>
<dbReference type="GO" id="GO:0001682">
    <property type="term" value="P:tRNA 5'-leader removal"/>
    <property type="evidence" value="ECO:0007669"/>
    <property type="project" value="UniProtKB-UniRule"/>
</dbReference>
<dbReference type="FunFam" id="3.30.230.10:FF:000016">
    <property type="entry name" value="Ribonuclease P protein component"/>
    <property type="match status" value="1"/>
</dbReference>
<dbReference type="Gene3D" id="3.30.230.10">
    <property type="match status" value="1"/>
</dbReference>
<dbReference type="HAMAP" id="MF_00227">
    <property type="entry name" value="RNase_P"/>
    <property type="match status" value="1"/>
</dbReference>
<dbReference type="InterPro" id="IPR020568">
    <property type="entry name" value="Ribosomal_Su5_D2-typ_SF"/>
</dbReference>
<dbReference type="InterPro" id="IPR014721">
    <property type="entry name" value="Ribsml_uS5_D2-typ_fold_subgr"/>
</dbReference>
<dbReference type="InterPro" id="IPR000100">
    <property type="entry name" value="RNase_P"/>
</dbReference>
<dbReference type="InterPro" id="IPR020539">
    <property type="entry name" value="RNase_P_CS"/>
</dbReference>
<dbReference type="NCBIfam" id="TIGR00188">
    <property type="entry name" value="rnpA"/>
    <property type="match status" value="1"/>
</dbReference>
<dbReference type="PANTHER" id="PTHR33992">
    <property type="entry name" value="RIBONUCLEASE P PROTEIN COMPONENT"/>
    <property type="match status" value="1"/>
</dbReference>
<dbReference type="PANTHER" id="PTHR33992:SF1">
    <property type="entry name" value="RIBONUCLEASE P PROTEIN COMPONENT"/>
    <property type="match status" value="1"/>
</dbReference>
<dbReference type="Pfam" id="PF00825">
    <property type="entry name" value="Ribonuclease_P"/>
    <property type="match status" value="1"/>
</dbReference>
<dbReference type="SUPFAM" id="SSF54211">
    <property type="entry name" value="Ribosomal protein S5 domain 2-like"/>
    <property type="match status" value="1"/>
</dbReference>
<dbReference type="PROSITE" id="PS00648">
    <property type="entry name" value="RIBONUCLEASE_P"/>
    <property type="match status" value="1"/>
</dbReference>